<sequence length="498" mass="56123">MSTSILRRILDPTRKPKPDAILSISLLTTVSSPPSPPSDPLISDAVSILTHHRSKSRWSTLRSLQPSGFTPSQFSEITLCLRNNPHLSLRFFLFTRRYSLCSHDTHSCSTLIHILSRSRLKSHASEIIRLALRLAATDEDEDRVLKVFRSLIKSYNRCGSAPFVFDLLIKSCLDSKEIDGAVMVMRKLRSRGINAQISTCNALITEVSRRRGASNGYKMYREVFGLDDVSVDEAKKMIGKIKPNATTFNSMMVSFYREGETEMVERIWREMEEEVGCSPNVYSYNVLMEAYCARGLMSEAEKVWEEMKVRGVVYDIVAYNTMIGGLCSNFEVVKAKELFRDMGLKGIECTCLTYEHLVNGYCKAGDVDSGLVVYREMKRKGFEADGLTIEALVEGLCDDRDGQRVVEAADIVKDAVREAMFYPSRNCYELLVKRLCEDGKMDRALNIQAEMVGKGFKPSQETYRAFIDGYGIVGDEETSALLAIEMAESLKLRAEEES</sequence>
<organism>
    <name type="scientific">Arabidopsis thaliana</name>
    <name type="common">Mouse-ear cress</name>
    <dbReference type="NCBI Taxonomy" id="3702"/>
    <lineage>
        <taxon>Eukaryota</taxon>
        <taxon>Viridiplantae</taxon>
        <taxon>Streptophyta</taxon>
        <taxon>Embryophyta</taxon>
        <taxon>Tracheophyta</taxon>
        <taxon>Spermatophyta</taxon>
        <taxon>Magnoliopsida</taxon>
        <taxon>eudicotyledons</taxon>
        <taxon>Gunneridae</taxon>
        <taxon>Pentapetalae</taxon>
        <taxon>rosids</taxon>
        <taxon>malvids</taxon>
        <taxon>Brassicales</taxon>
        <taxon>Brassicaceae</taxon>
        <taxon>Camelineae</taxon>
        <taxon>Arabidopsis</taxon>
    </lineage>
</organism>
<accession>Q9XIM8</accession>
<feature type="chain" id="PRO_0000356015" description="Pentatricopeptide repeat-containing protein At2g15980">
    <location>
        <begin position="1"/>
        <end position="498"/>
    </location>
</feature>
<feature type="repeat" description="PPR 1">
    <location>
        <begin position="244"/>
        <end position="274"/>
    </location>
</feature>
<feature type="repeat" description="PPR 2">
    <location>
        <begin position="280"/>
        <end position="314"/>
    </location>
</feature>
<feature type="repeat" description="PPR 3">
    <location>
        <begin position="315"/>
        <end position="349"/>
    </location>
</feature>
<feature type="repeat" description="PPR 4">
    <location>
        <begin position="350"/>
        <end position="384"/>
    </location>
</feature>
<feature type="repeat" description="PPR 5">
    <location>
        <begin position="385"/>
        <end position="423"/>
    </location>
</feature>
<feature type="repeat" description="PPR 6">
    <location>
        <begin position="424"/>
        <end position="458"/>
    </location>
</feature>
<feature type="repeat" description="PPR 7">
    <location>
        <begin position="459"/>
        <end position="489"/>
    </location>
</feature>
<keyword id="KW-1185">Reference proteome</keyword>
<keyword id="KW-0677">Repeat</keyword>
<evidence type="ECO:0000305" key="1"/>
<dbReference type="EMBL" id="AC006438">
    <property type="protein sequence ID" value="AAD41970.1"/>
    <property type="molecule type" value="Genomic_DNA"/>
</dbReference>
<dbReference type="EMBL" id="CP002685">
    <property type="protein sequence ID" value="AEC06453.1"/>
    <property type="molecule type" value="Genomic_DNA"/>
</dbReference>
<dbReference type="PIR" id="D84535">
    <property type="entry name" value="D84535"/>
</dbReference>
<dbReference type="RefSeq" id="NP_179197.1">
    <property type="nucleotide sequence ID" value="NM_127157.1"/>
</dbReference>
<dbReference type="SMR" id="Q9XIM8"/>
<dbReference type="FunCoup" id="Q9XIM8">
    <property type="interactions" value="580"/>
</dbReference>
<dbReference type="PaxDb" id="3702-AT2G15980.1"/>
<dbReference type="ProteomicsDB" id="249420"/>
<dbReference type="EnsemblPlants" id="AT2G15980.1">
    <property type="protein sequence ID" value="AT2G15980.1"/>
    <property type="gene ID" value="AT2G15980"/>
</dbReference>
<dbReference type="GeneID" id="816093"/>
<dbReference type="Gramene" id="AT2G15980.1">
    <property type="protein sequence ID" value="AT2G15980.1"/>
    <property type="gene ID" value="AT2G15980"/>
</dbReference>
<dbReference type="KEGG" id="ath:AT2G15980"/>
<dbReference type="Araport" id="AT2G15980"/>
<dbReference type="TAIR" id="AT2G15980"/>
<dbReference type="eggNOG" id="KOG4197">
    <property type="taxonomic scope" value="Eukaryota"/>
</dbReference>
<dbReference type="HOGENOM" id="CLU_002706_49_26_1"/>
<dbReference type="InParanoid" id="Q9XIM8"/>
<dbReference type="OMA" id="TYRECDS"/>
<dbReference type="PhylomeDB" id="Q9XIM8"/>
<dbReference type="PRO" id="PR:Q9XIM8"/>
<dbReference type="Proteomes" id="UP000006548">
    <property type="component" value="Chromosome 2"/>
</dbReference>
<dbReference type="ExpressionAtlas" id="Q9XIM8">
    <property type="expression patterns" value="baseline and differential"/>
</dbReference>
<dbReference type="Gene3D" id="1.25.40.10">
    <property type="entry name" value="Tetratricopeptide repeat domain"/>
    <property type="match status" value="3"/>
</dbReference>
<dbReference type="InterPro" id="IPR002885">
    <property type="entry name" value="Pentatricopeptide_rpt"/>
</dbReference>
<dbReference type="InterPro" id="IPR011990">
    <property type="entry name" value="TPR-like_helical_dom_sf"/>
</dbReference>
<dbReference type="NCBIfam" id="TIGR00756">
    <property type="entry name" value="PPR"/>
    <property type="match status" value="5"/>
</dbReference>
<dbReference type="PANTHER" id="PTHR47447">
    <property type="entry name" value="OS03G0856100 PROTEIN"/>
    <property type="match status" value="1"/>
</dbReference>
<dbReference type="PANTHER" id="PTHR47447:SF28">
    <property type="entry name" value="PENTACOTRIPEPTIDE-REPEAT REGION OF PRORP DOMAIN-CONTAINING PROTEIN"/>
    <property type="match status" value="1"/>
</dbReference>
<dbReference type="Pfam" id="PF01535">
    <property type="entry name" value="PPR"/>
    <property type="match status" value="1"/>
</dbReference>
<dbReference type="Pfam" id="PF13041">
    <property type="entry name" value="PPR_2"/>
    <property type="match status" value="2"/>
</dbReference>
<dbReference type="PROSITE" id="PS51375">
    <property type="entry name" value="PPR"/>
    <property type="match status" value="9"/>
</dbReference>
<gene>
    <name type="ordered locus">At2g15980</name>
    <name type="ORF">F19G14.2</name>
</gene>
<name>PP155_ARATH</name>
<reference key="1">
    <citation type="journal article" date="1999" name="Nature">
        <title>Sequence and analysis of chromosome 2 of the plant Arabidopsis thaliana.</title>
        <authorList>
            <person name="Lin X."/>
            <person name="Kaul S."/>
            <person name="Rounsley S.D."/>
            <person name="Shea T.P."/>
            <person name="Benito M.-I."/>
            <person name="Town C.D."/>
            <person name="Fujii C.Y."/>
            <person name="Mason T.M."/>
            <person name="Bowman C.L."/>
            <person name="Barnstead M.E."/>
            <person name="Feldblyum T.V."/>
            <person name="Buell C.R."/>
            <person name="Ketchum K.A."/>
            <person name="Lee J.J."/>
            <person name="Ronning C.M."/>
            <person name="Koo H.L."/>
            <person name="Moffat K.S."/>
            <person name="Cronin L.A."/>
            <person name="Shen M."/>
            <person name="Pai G."/>
            <person name="Van Aken S."/>
            <person name="Umayam L."/>
            <person name="Tallon L.J."/>
            <person name="Gill J.E."/>
            <person name="Adams M.D."/>
            <person name="Carrera A.J."/>
            <person name="Creasy T.H."/>
            <person name="Goodman H.M."/>
            <person name="Somerville C.R."/>
            <person name="Copenhaver G.P."/>
            <person name="Preuss D."/>
            <person name="Nierman W.C."/>
            <person name="White O."/>
            <person name="Eisen J.A."/>
            <person name="Salzberg S.L."/>
            <person name="Fraser C.M."/>
            <person name="Venter J.C."/>
        </authorList>
    </citation>
    <scope>NUCLEOTIDE SEQUENCE [LARGE SCALE GENOMIC DNA]</scope>
    <source>
        <strain>cv. Columbia</strain>
    </source>
</reference>
<reference key="2">
    <citation type="journal article" date="2017" name="Plant J.">
        <title>Araport11: a complete reannotation of the Arabidopsis thaliana reference genome.</title>
        <authorList>
            <person name="Cheng C.Y."/>
            <person name="Krishnakumar V."/>
            <person name="Chan A.P."/>
            <person name="Thibaud-Nissen F."/>
            <person name="Schobel S."/>
            <person name="Town C.D."/>
        </authorList>
    </citation>
    <scope>GENOME REANNOTATION</scope>
    <source>
        <strain>cv. Columbia</strain>
    </source>
</reference>
<reference key="3">
    <citation type="journal article" date="2004" name="Plant Cell">
        <title>Genome-wide analysis of Arabidopsis pentatricopeptide repeat proteins reveals their essential role in organelle biogenesis.</title>
        <authorList>
            <person name="Lurin C."/>
            <person name="Andres C."/>
            <person name="Aubourg S."/>
            <person name="Bellaoui M."/>
            <person name="Bitton F."/>
            <person name="Bruyere C."/>
            <person name="Caboche M."/>
            <person name="Debast C."/>
            <person name="Gualberto J."/>
            <person name="Hoffmann B."/>
            <person name="Lecharny A."/>
            <person name="Le Ret M."/>
            <person name="Martin-Magniette M.-L."/>
            <person name="Mireau H."/>
            <person name="Peeters N."/>
            <person name="Renou J.-P."/>
            <person name="Szurek B."/>
            <person name="Taconnat L."/>
            <person name="Small I."/>
        </authorList>
    </citation>
    <scope>GENE FAMILY</scope>
</reference>
<protein>
    <recommendedName>
        <fullName>Pentatricopeptide repeat-containing protein At2g15980</fullName>
    </recommendedName>
</protein>
<proteinExistence type="evidence at transcript level"/>
<comment type="similarity">
    <text evidence="1">Belongs to the PPR family. P subfamily.</text>
</comment>
<comment type="online information" name="Pentatricopeptide repeat proteins">
    <link uri="https://ppr.plantenergy.uwa.edu.au"/>
</comment>